<dbReference type="EC" id="2.5.1.6"/>
<dbReference type="EMBL" id="X66398">
    <property type="protein sequence ID" value="CAA47022.1"/>
    <property type="molecule type" value="Genomic_DNA"/>
</dbReference>
<dbReference type="EMBL" id="CP001710">
    <property type="protein sequence ID" value="ADL59331.1"/>
    <property type="molecule type" value="Genomic_DNA"/>
</dbReference>
<dbReference type="EMBL" id="M59245">
    <property type="protein sequence ID" value="AAA72949.1"/>
    <property type="molecule type" value="Genomic_DNA"/>
</dbReference>
<dbReference type="RefSeq" id="WP_013296541.1">
    <property type="nucleotide sequence ID" value="NC_014408.1"/>
</dbReference>
<dbReference type="SMR" id="P26498"/>
<dbReference type="STRING" id="79929.MTBMA_c17630"/>
<dbReference type="PaxDb" id="79929-MTBMA_c17630"/>
<dbReference type="GeneID" id="92394375"/>
<dbReference type="GeneID" id="9705474"/>
<dbReference type="KEGG" id="mmg:MTBMA_c17630"/>
<dbReference type="PATRIC" id="fig|79929.8.peg.1700"/>
<dbReference type="HOGENOM" id="CLU_057642_0_0_2"/>
<dbReference type="OrthoDB" id="204488at2157"/>
<dbReference type="UniPathway" id="UPA00315">
    <property type="reaction ID" value="UER00080"/>
</dbReference>
<dbReference type="Proteomes" id="UP000000345">
    <property type="component" value="Chromosome"/>
</dbReference>
<dbReference type="GO" id="GO:0005524">
    <property type="term" value="F:ATP binding"/>
    <property type="evidence" value="ECO:0007669"/>
    <property type="project" value="UniProtKB-UniRule"/>
</dbReference>
<dbReference type="GO" id="GO:0000287">
    <property type="term" value="F:magnesium ion binding"/>
    <property type="evidence" value="ECO:0007669"/>
    <property type="project" value="UniProtKB-UniRule"/>
</dbReference>
<dbReference type="GO" id="GO:0004478">
    <property type="term" value="F:methionine adenosyltransferase activity"/>
    <property type="evidence" value="ECO:0007669"/>
    <property type="project" value="UniProtKB-UniRule"/>
</dbReference>
<dbReference type="GO" id="GO:0006730">
    <property type="term" value="P:one-carbon metabolic process"/>
    <property type="evidence" value="ECO:0007669"/>
    <property type="project" value="UniProtKB-KW"/>
</dbReference>
<dbReference type="GO" id="GO:0006556">
    <property type="term" value="P:S-adenosylmethionine biosynthetic process"/>
    <property type="evidence" value="ECO:0007669"/>
    <property type="project" value="UniProtKB-UniRule"/>
</dbReference>
<dbReference type="Gene3D" id="3.30.300.10">
    <property type="match status" value="1"/>
</dbReference>
<dbReference type="Gene3D" id="3.30.300.280">
    <property type="entry name" value="S-adenosylmethionine synthetase, C-terminal domain"/>
    <property type="match status" value="2"/>
</dbReference>
<dbReference type="HAMAP" id="MF_00136">
    <property type="entry name" value="S_AdoMet_synth2"/>
    <property type="match status" value="1"/>
</dbReference>
<dbReference type="InterPro" id="IPR027790">
    <property type="entry name" value="AdoMet_synthase_2_family"/>
</dbReference>
<dbReference type="InterPro" id="IPR042544">
    <property type="entry name" value="AdoMet_synthase_3"/>
</dbReference>
<dbReference type="InterPro" id="IPR002795">
    <property type="entry name" value="S-AdoMet_synthetase_arc"/>
</dbReference>
<dbReference type="NCBIfam" id="NF003364">
    <property type="entry name" value="PRK04439.1-3"/>
    <property type="match status" value="1"/>
</dbReference>
<dbReference type="NCBIfam" id="NF003366">
    <property type="entry name" value="PRK04439.1-5"/>
    <property type="match status" value="1"/>
</dbReference>
<dbReference type="PANTHER" id="PTHR36697">
    <property type="entry name" value="S-ADENOSYLMETHIONINE SYNTHASE"/>
    <property type="match status" value="1"/>
</dbReference>
<dbReference type="PANTHER" id="PTHR36697:SF1">
    <property type="entry name" value="S-ADENOSYLMETHIONINE SYNTHASE"/>
    <property type="match status" value="1"/>
</dbReference>
<dbReference type="Pfam" id="PF01941">
    <property type="entry name" value="AdoMet_Synthase"/>
    <property type="match status" value="1"/>
</dbReference>
<keyword id="KW-0067">ATP-binding</keyword>
<keyword id="KW-0460">Magnesium</keyword>
<keyword id="KW-0547">Nucleotide-binding</keyword>
<keyword id="KW-0554">One-carbon metabolism</keyword>
<keyword id="KW-0808">Transferase</keyword>
<organism>
    <name type="scientific">Methanothermobacter marburgensis (strain ATCC BAA-927 / DSM 2133 / JCM 14651 / NBRC 100331 / OCM 82 / Marburg)</name>
    <name type="common">Methanobacterium thermoautotrophicum</name>
    <dbReference type="NCBI Taxonomy" id="79929"/>
    <lineage>
        <taxon>Archaea</taxon>
        <taxon>Methanobacteriati</taxon>
        <taxon>Methanobacteriota</taxon>
        <taxon>Methanomada group</taxon>
        <taxon>Methanobacteria</taxon>
        <taxon>Methanobacteriales</taxon>
        <taxon>Methanobacteriaceae</taxon>
        <taxon>Methanothermobacter</taxon>
    </lineage>
</organism>
<sequence>MRNIIVEPLNQTPIEDQKVEIVERKGIGHPDSISDGIAESVSRALCNAYLDRFGAIMHHNTDEVQITAGESAPQFGGGEVIKPIEILLTGRGIAEVDGEKIGLDRIAISAAKEYLRDNIINLDVETCTVVECKIGHGSGDLRDVFARKGRAPLSNDTSFGVGFAPFSETERIVMEAENLLNSPEFKKKYPAVGEDIKVMGLRENDNITLTVACAMVDRYVSDLEEYLEIKNVVKDEVFKLASGITERNLEVFVNTADRCEDDEPSVYITVTGTSAEMGDDGSVGRGNRANGLITPNRPMSMEATSGKNPINHVGKIYNLLSNQMAADIVESIEGVKQVHIMILSQIGKPIDHPKAATAQVILEDGYTMDDITGKVSGVMDAWLEDIPSITEMLVKGQLRTF</sequence>
<comment type="function">
    <text evidence="1">Catalyzes the formation of S-adenosylmethionine from methionine and ATP.</text>
</comment>
<comment type="catalytic activity">
    <reaction>
        <text>L-methionine + ATP + H2O = S-adenosyl-L-methionine + phosphate + diphosphate</text>
        <dbReference type="Rhea" id="RHEA:21080"/>
        <dbReference type="ChEBI" id="CHEBI:15377"/>
        <dbReference type="ChEBI" id="CHEBI:30616"/>
        <dbReference type="ChEBI" id="CHEBI:33019"/>
        <dbReference type="ChEBI" id="CHEBI:43474"/>
        <dbReference type="ChEBI" id="CHEBI:57844"/>
        <dbReference type="ChEBI" id="CHEBI:59789"/>
        <dbReference type="EC" id="2.5.1.6"/>
    </reaction>
</comment>
<comment type="cofactor">
    <cofactor evidence="1">
        <name>Mg(2+)</name>
        <dbReference type="ChEBI" id="CHEBI:18420"/>
    </cofactor>
</comment>
<comment type="pathway">
    <text>Amino-acid biosynthesis; S-adenosyl-L-methionine biosynthesis; S-adenosyl-L-methionine from L-methionine: step 1/1.</text>
</comment>
<comment type="similarity">
    <text evidence="3">Belongs to the AdoMet synthase 2 family.</text>
</comment>
<feature type="chain" id="PRO_0000150033" description="S-adenosylmethionine synthase">
    <location>
        <begin position="1"/>
        <end position="401"/>
    </location>
</feature>
<feature type="binding site" evidence="2">
    <location>
        <begin position="135"/>
        <end position="140"/>
    </location>
    <ligand>
        <name>ATP</name>
        <dbReference type="ChEBI" id="CHEBI:30616"/>
    </ligand>
</feature>
<name>METK_METTM</name>
<reference key="1">
    <citation type="journal article" date="1993" name="J. Bacteriol.">
        <title>Transcription of the ileS operon in the archaeon Methanobacterium thermoautotrophicum Marburg.</title>
        <authorList>
            <person name="Jenal U."/>
            <person name="Thurner C."/>
            <person name="Leisinger T."/>
        </authorList>
    </citation>
    <scope>NUCLEOTIDE SEQUENCE [GENOMIC DNA]</scope>
    <source>
        <strain>ATCC BAA-927 / DSM 2133 / JCM 14651 / NBRC 100331 / OCM 82 / Marburg</strain>
    </source>
</reference>
<reference key="2">
    <citation type="journal article" date="2010" name="J. Bacteriol.">
        <title>Complete genome sequence of Methanothermobacter marburgensis, a methanoarchaeon model organism.</title>
        <authorList>
            <person name="Liesegang H."/>
            <person name="Kaster A.K."/>
            <person name="Wiezer A."/>
            <person name="Goenrich M."/>
            <person name="Wollherr A."/>
            <person name="Seedorf H."/>
            <person name="Gottschalk G."/>
            <person name="Thauer R.K."/>
        </authorList>
    </citation>
    <scope>NUCLEOTIDE SEQUENCE [LARGE SCALE GENOMIC DNA]</scope>
    <source>
        <strain>ATCC BAA-927 / DSM 2133 / JCM 14651 / NBRC 100331 / OCM 82 / Marburg</strain>
    </source>
</reference>
<reference key="3">
    <citation type="journal article" date="1991" name="J. Biol. Chem.">
        <title>Isoleucyl-tRNA synthetase of Methanobacterium thermoautotrophicum Marburg. Cloning of the gene, nucleotide sequence, and localization of a base change conferring resistance to pseudomonic acid.</title>
        <authorList>
            <person name="Jenal U."/>
            <person name="Rechsteiner T."/>
            <person name="Tan P.-Y."/>
            <person name="Buehlmann E."/>
            <person name="Meile L."/>
            <person name="Leisinger T."/>
        </authorList>
    </citation>
    <scope>NUCLEOTIDE SEQUENCE [GENOMIC DNA] OF 184-401</scope>
    <source>
        <strain>ATCC BAA-927 / DSM 2133 / JCM 14651 / NBRC 100331 / OCM 82 / Marburg</strain>
    </source>
</reference>
<accession>P26498</accession>
<accession>D9PYN3</accession>
<evidence type="ECO:0000250" key="1"/>
<evidence type="ECO:0000255" key="2"/>
<evidence type="ECO:0000305" key="3"/>
<protein>
    <recommendedName>
        <fullName>S-adenosylmethionine synthase</fullName>
        <shortName>AdoMet synthase</shortName>
        <ecNumber>2.5.1.6</ecNumber>
    </recommendedName>
    <alternativeName>
        <fullName>Methionine adenosyltransferase</fullName>
    </alternativeName>
</protein>
<proteinExistence type="inferred from homology"/>
<gene>
    <name type="primary">mat</name>
    <name type="synonym">metK</name>
    <name type="ordered locus">MTBMA_c17630</name>
</gene>